<organism>
    <name type="scientific">Methylocella silvestris (strain DSM 15510 / CIP 108128 / LMG 27833 / NCIMB 13906 / BL2)</name>
    <dbReference type="NCBI Taxonomy" id="395965"/>
    <lineage>
        <taxon>Bacteria</taxon>
        <taxon>Pseudomonadati</taxon>
        <taxon>Pseudomonadota</taxon>
        <taxon>Alphaproteobacteria</taxon>
        <taxon>Hyphomicrobiales</taxon>
        <taxon>Beijerinckiaceae</taxon>
        <taxon>Methylocella</taxon>
    </lineage>
</organism>
<keyword id="KW-0067">ATP-binding</keyword>
<keyword id="KW-0173">Coenzyme A biosynthesis</keyword>
<keyword id="KW-0963">Cytoplasm</keyword>
<keyword id="KW-0460">Magnesium</keyword>
<keyword id="KW-0547">Nucleotide-binding</keyword>
<keyword id="KW-0548">Nucleotidyltransferase</keyword>
<keyword id="KW-1185">Reference proteome</keyword>
<keyword id="KW-0808">Transferase</keyword>
<dbReference type="EC" id="2.7.7.3" evidence="1"/>
<dbReference type="EMBL" id="CP001280">
    <property type="protein sequence ID" value="ACK52440.1"/>
    <property type="molecule type" value="Genomic_DNA"/>
</dbReference>
<dbReference type="RefSeq" id="WP_012592509.1">
    <property type="nucleotide sequence ID" value="NC_011666.1"/>
</dbReference>
<dbReference type="SMR" id="B8EIU8"/>
<dbReference type="STRING" id="395965.Msil_3551"/>
<dbReference type="KEGG" id="msl:Msil_3551"/>
<dbReference type="eggNOG" id="COG0669">
    <property type="taxonomic scope" value="Bacteria"/>
</dbReference>
<dbReference type="HOGENOM" id="CLU_100149_0_1_5"/>
<dbReference type="OrthoDB" id="9806661at2"/>
<dbReference type="UniPathway" id="UPA00241">
    <property type="reaction ID" value="UER00355"/>
</dbReference>
<dbReference type="Proteomes" id="UP000002257">
    <property type="component" value="Chromosome"/>
</dbReference>
<dbReference type="GO" id="GO:0005737">
    <property type="term" value="C:cytoplasm"/>
    <property type="evidence" value="ECO:0007669"/>
    <property type="project" value="UniProtKB-SubCell"/>
</dbReference>
<dbReference type="GO" id="GO:0005524">
    <property type="term" value="F:ATP binding"/>
    <property type="evidence" value="ECO:0007669"/>
    <property type="project" value="UniProtKB-KW"/>
</dbReference>
<dbReference type="GO" id="GO:0004595">
    <property type="term" value="F:pantetheine-phosphate adenylyltransferase activity"/>
    <property type="evidence" value="ECO:0007669"/>
    <property type="project" value="UniProtKB-UniRule"/>
</dbReference>
<dbReference type="GO" id="GO:0015937">
    <property type="term" value="P:coenzyme A biosynthetic process"/>
    <property type="evidence" value="ECO:0007669"/>
    <property type="project" value="UniProtKB-UniRule"/>
</dbReference>
<dbReference type="CDD" id="cd02163">
    <property type="entry name" value="PPAT"/>
    <property type="match status" value="1"/>
</dbReference>
<dbReference type="Gene3D" id="3.40.50.620">
    <property type="entry name" value="HUPs"/>
    <property type="match status" value="1"/>
</dbReference>
<dbReference type="HAMAP" id="MF_00151">
    <property type="entry name" value="PPAT_bact"/>
    <property type="match status" value="1"/>
</dbReference>
<dbReference type="InterPro" id="IPR004821">
    <property type="entry name" value="Cyt_trans-like"/>
</dbReference>
<dbReference type="InterPro" id="IPR001980">
    <property type="entry name" value="PPAT"/>
</dbReference>
<dbReference type="InterPro" id="IPR014729">
    <property type="entry name" value="Rossmann-like_a/b/a_fold"/>
</dbReference>
<dbReference type="NCBIfam" id="TIGR01510">
    <property type="entry name" value="coaD_prev_kdtB"/>
    <property type="match status" value="1"/>
</dbReference>
<dbReference type="NCBIfam" id="TIGR00125">
    <property type="entry name" value="cyt_tran_rel"/>
    <property type="match status" value="1"/>
</dbReference>
<dbReference type="PANTHER" id="PTHR21342">
    <property type="entry name" value="PHOSPHOPANTETHEINE ADENYLYLTRANSFERASE"/>
    <property type="match status" value="1"/>
</dbReference>
<dbReference type="PANTHER" id="PTHR21342:SF1">
    <property type="entry name" value="PHOSPHOPANTETHEINE ADENYLYLTRANSFERASE"/>
    <property type="match status" value="1"/>
</dbReference>
<dbReference type="Pfam" id="PF01467">
    <property type="entry name" value="CTP_transf_like"/>
    <property type="match status" value="1"/>
</dbReference>
<dbReference type="PRINTS" id="PR01020">
    <property type="entry name" value="LPSBIOSNTHSS"/>
</dbReference>
<dbReference type="SUPFAM" id="SSF52374">
    <property type="entry name" value="Nucleotidylyl transferase"/>
    <property type="match status" value="1"/>
</dbReference>
<protein>
    <recommendedName>
        <fullName evidence="1">Phosphopantetheine adenylyltransferase</fullName>
        <ecNumber evidence="1">2.7.7.3</ecNumber>
    </recommendedName>
    <alternativeName>
        <fullName evidence="1">Dephospho-CoA pyrophosphorylase</fullName>
    </alternativeName>
    <alternativeName>
        <fullName evidence="1">Pantetheine-phosphate adenylyltransferase</fullName>
        <shortName evidence="1">PPAT</shortName>
    </alternativeName>
</protein>
<sequence>MNRIALYTGSFDPLTNGHLDVITSAASICDELVVGIGAHPSKAPLFSVDERAALIDRSCRDFLKERSCRLSVQPFFGLAVEAARAAGARILIRGLRNGSDFDYEAQMAGMNAAMAPEIRTVFFVASPGVGHITATLVRQIAAMGGDVSHFVPQPVLRALEAKSKTDG</sequence>
<gene>
    <name evidence="1" type="primary">coaD</name>
    <name type="ordered locus">Msil_3551</name>
</gene>
<feature type="chain" id="PRO_1000123292" description="Phosphopantetheine adenylyltransferase">
    <location>
        <begin position="1"/>
        <end position="167"/>
    </location>
</feature>
<feature type="binding site" evidence="1">
    <location>
        <begin position="10"/>
        <end position="11"/>
    </location>
    <ligand>
        <name>ATP</name>
        <dbReference type="ChEBI" id="CHEBI:30616"/>
    </ligand>
</feature>
<feature type="binding site" evidence="1">
    <location>
        <position position="10"/>
    </location>
    <ligand>
        <name>substrate</name>
    </ligand>
</feature>
<feature type="binding site" evidence="1">
    <location>
        <position position="18"/>
    </location>
    <ligand>
        <name>ATP</name>
        <dbReference type="ChEBI" id="CHEBI:30616"/>
    </ligand>
</feature>
<feature type="binding site" evidence="1">
    <location>
        <position position="42"/>
    </location>
    <ligand>
        <name>substrate</name>
    </ligand>
</feature>
<feature type="binding site" evidence="1">
    <location>
        <position position="79"/>
    </location>
    <ligand>
        <name>substrate</name>
    </ligand>
</feature>
<feature type="binding site" evidence="1">
    <location>
        <position position="93"/>
    </location>
    <ligand>
        <name>substrate</name>
    </ligand>
</feature>
<feature type="binding site" evidence="1">
    <location>
        <begin position="94"/>
        <end position="96"/>
    </location>
    <ligand>
        <name>ATP</name>
        <dbReference type="ChEBI" id="CHEBI:30616"/>
    </ligand>
</feature>
<feature type="binding site" evidence="1">
    <location>
        <position position="104"/>
    </location>
    <ligand>
        <name>ATP</name>
        <dbReference type="ChEBI" id="CHEBI:30616"/>
    </ligand>
</feature>
<feature type="binding site" evidence="1">
    <location>
        <begin position="129"/>
        <end position="135"/>
    </location>
    <ligand>
        <name>ATP</name>
        <dbReference type="ChEBI" id="CHEBI:30616"/>
    </ligand>
</feature>
<feature type="site" description="Transition state stabilizer" evidence="1">
    <location>
        <position position="18"/>
    </location>
</feature>
<name>COAD_METSB</name>
<accession>B8EIU8</accession>
<proteinExistence type="inferred from homology"/>
<reference key="1">
    <citation type="journal article" date="2010" name="J. Bacteriol.">
        <title>Complete genome sequence of the aerobic facultative methanotroph Methylocella silvestris BL2.</title>
        <authorList>
            <person name="Chen Y."/>
            <person name="Crombie A."/>
            <person name="Rahman M.T."/>
            <person name="Dedysh S.N."/>
            <person name="Liesack W."/>
            <person name="Stott M.B."/>
            <person name="Alam M."/>
            <person name="Theisen A.R."/>
            <person name="Murrell J.C."/>
            <person name="Dunfield P.F."/>
        </authorList>
    </citation>
    <scope>NUCLEOTIDE SEQUENCE [LARGE SCALE GENOMIC DNA]</scope>
    <source>
        <strain>DSM 15510 / CIP 108128 / LMG 27833 / NCIMB 13906 / BL2</strain>
    </source>
</reference>
<evidence type="ECO:0000255" key="1">
    <source>
        <dbReference type="HAMAP-Rule" id="MF_00151"/>
    </source>
</evidence>
<comment type="function">
    <text evidence="1">Reversibly transfers an adenylyl group from ATP to 4'-phosphopantetheine, yielding dephospho-CoA (dPCoA) and pyrophosphate.</text>
</comment>
<comment type="catalytic activity">
    <reaction evidence="1">
        <text>(R)-4'-phosphopantetheine + ATP + H(+) = 3'-dephospho-CoA + diphosphate</text>
        <dbReference type="Rhea" id="RHEA:19801"/>
        <dbReference type="ChEBI" id="CHEBI:15378"/>
        <dbReference type="ChEBI" id="CHEBI:30616"/>
        <dbReference type="ChEBI" id="CHEBI:33019"/>
        <dbReference type="ChEBI" id="CHEBI:57328"/>
        <dbReference type="ChEBI" id="CHEBI:61723"/>
        <dbReference type="EC" id="2.7.7.3"/>
    </reaction>
</comment>
<comment type="cofactor">
    <cofactor evidence="1">
        <name>Mg(2+)</name>
        <dbReference type="ChEBI" id="CHEBI:18420"/>
    </cofactor>
</comment>
<comment type="pathway">
    <text evidence="1">Cofactor biosynthesis; coenzyme A biosynthesis; CoA from (R)-pantothenate: step 4/5.</text>
</comment>
<comment type="subunit">
    <text evidence="1">Homohexamer.</text>
</comment>
<comment type="subcellular location">
    <subcellularLocation>
        <location evidence="1">Cytoplasm</location>
    </subcellularLocation>
</comment>
<comment type="similarity">
    <text evidence="1">Belongs to the bacterial CoaD family.</text>
</comment>